<comment type="function">
    <text evidence="1">Participates in chromosomal partition during cell division. May act via the formation of a condensin-like complex containing Smc and ScpA that pull DNA away from mid-cell into both cell halves.</text>
</comment>
<comment type="subunit">
    <text evidence="1">Homodimer. Homodimerization may be required to stabilize the binding of ScpA to the Smc head domains. Component of a cohesin-like complex composed of ScpA, ScpB and the Smc homodimer, in which ScpA and ScpB bind to the head domain of Smc. The presence of the three proteins is required for the association of the complex with DNA.</text>
</comment>
<comment type="subcellular location">
    <subcellularLocation>
        <location evidence="1">Cytoplasm</location>
    </subcellularLocation>
    <text evidence="1">Associated with two foci at the outer edges of the nucleoid region in young cells, and at four foci within both cell halves in older cells.</text>
</comment>
<comment type="similarity">
    <text evidence="1">Belongs to the ScpB family.</text>
</comment>
<name>SCPB_STRPB</name>
<reference key="1">
    <citation type="journal article" date="2006" name="Proc. Natl. Acad. Sci. U.S.A.">
        <title>Molecular genetic anatomy of inter- and intraserotype variation in the human bacterial pathogen group A Streptococcus.</title>
        <authorList>
            <person name="Beres S.B."/>
            <person name="Richter E.W."/>
            <person name="Nagiec M.J."/>
            <person name="Sumby P."/>
            <person name="Porcella S.F."/>
            <person name="DeLeo F.R."/>
            <person name="Musser J.M."/>
        </authorList>
    </citation>
    <scope>NUCLEOTIDE SEQUENCE [LARGE SCALE GENOMIC DNA]</scope>
    <source>
        <strain>MGAS2096</strain>
    </source>
</reference>
<organism>
    <name type="scientific">Streptococcus pyogenes serotype M12 (strain MGAS2096)</name>
    <dbReference type="NCBI Taxonomy" id="370553"/>
    <lineage>
        <taxon>Bacteria</taxon>
        <taxon>Bacillati</taxon>
        <taxon>Bacillota</taxon>
        <taxon>Bacilli</taxon>
        <taxon>Lactobacillales</taxon>
        <taxon>Streptococcaceae</taxon>
        <taxon>Streptococcus</taxon>
    </lineage>
</organism>
<dbReference type="EMBL" id="CP000261">
    <property type="protein sequence ID" value="ABF35378.1"/>
    <property type="molecule type" value="Genomic_DNA"/>
</dbReference>
<dbReference type="SMR" id="Q1JDD0"/>
<dbReference type="KEGG" id="spj:MGAS2096_Spy0326"/>
<dbReference type="HOGENOM" id="CLU_045647_5_3_9"/>
<dbReference type="GO" id="GO:0005737">
    <property type="term" value="C:cytoplasm"/>
    <property type="evidence" value="ECO:0007669"/>
    <property type="project" value="UniProtKB-SubCell"/>
</dbReference>
<dbReference type="GO" id="GO:0051301">
    <property type="term" value="P:cell division"/>
    <property type="evidence" value="ECO:0007669"/>
    <property type="project" value="UniProtKB-KW"/>
</dbReference>
<dbReference type="GO" id="GO:0051304">
    <property type="term" value="P:chromosome separation"/>
    <property type="evidence" value="ECO:0007669"/>
    <property type="project" value="InterPro"/>
</dbReference>
<dbReference type="GO" id="GO:0006260">
    <property type="term" value="P:DNA replication"/>
    <property type="evidence" value="ECO:0007669"/>
    <property type="project" value="UniProtKB-UniRule"/>
</dbReference>
<dbReference type="Gene3D" id="1.10.10.10">
    <property type="entry name" value="Winged helix-like DNA-binding domain superfamily/Winged helix DNA-binding domain"/>
    <property type="match status" value="2"/>
</dbReference>
<dbReference type="HAMAP" id="MF_01804">
    <property type="entry name" value="ScpB"/>
    <property type="match status" value="1"/>
</dbReference>
<dbReference type="InterPro" id="IPR005234">
    <property type="entry name" value="ScpB_csome_segregation"/>
</dbReference>
<dbReference type="InterPro" id="IPR036388">
    <property type="entry name" value="WH-like_DNA-bd_sf"/>
</dbReference>
<dbReference type="InterPro" id="IPR036390">
    <property type="entry name" value="WH_DNA-bd_sf"/>
</dbReference>
<dbReference type="NCBIfam" id="TIGR00281">
    <property type="entry name" value="SMC-Scp complex subunit ScpB"/>
    <property type="match status" value="1"/>
</dbReference>
<dbReference type="PANTHER" id="PTHR34298">
    <property type="entry name" value="SEGREGATION AND CONDENSATION PROTEIN B"/>
    <property type="match status" value="1"/>
</dbReference>
<dbReference type="PANTHER" id="PTHR34298:SF2">
    <property type="entry name" value="SEGREGATION AND CONDENSATION PROTEIN B"/>
    <property type="match status" value="1"/>
</dbReference>
<dbReference type="Pfam" id="PF04079">
    <property type="entry name" value="SMC_ScpB"/>
    <property type="match status" value="1"/>
</dbReference>
<dbReference type="PIRSF" id="PIRSF019345">
    <property type="entry name" value="ScpB"/>
    <property type="match status" value="1"/>
</dbReference>
<dbReference type="SUPFAM" id="SSF46785">
    <property type="entry name" value="Winged helix' DNA-binding domain"/>
    <property type="match status" value="2"/>
</dbReference>
<proteinExistence type="inferred from homology"/>
<sequence>MTYLSQIEALLFVAGEEGLSLRHLASMLSLTPTALQQQLEKLSQKYEKDQHSSLCLIETANTYRLVTKEGFAGLLRAYAKTPMNQSLSRASLEVLSIVAYKQPITRIEIDDIRGVNSSGALSKLLAFDLIREAGKKDVVGRPHLYATTDYFLDYMGINHLDELIEVSAVEPADEEIALFRTQD</sequence>
<feature type="chain" id="PRO_0000273309" description="Segregation and condensation protein B">
    <location>
        <begin position="1"/>
        <end position="183"/>
    </location>
</feature>
<evidence type="ECO:0000255" key="1">
    <source>
        <dbReference type="HAMAP-Rule" id="MF_01804"/>
    </source>
</evidence>
<gene>
    <name evidence="1" type="primary">scpB</name>
    <name type="ordered locus">MGAS2096_Spy0326</name>
</gene>
<accession>Q1JDD0</accession>
<protein>
    <recommendedName>
        <fullName evidence="1">Segregation and condensation protein B</fullName>
    </recommendedName>
</protein>
<keyword id="KW-0131">Cell cycle</keyword>
<keyword id="KW-0132">Cell division</keyword>
<keyword id="KW-0159">Chromosome partition</keyword>
<keyword id="KW-0963">Cytoplasm</keyword>